<comment type="function">
    <text evidence="1">Promotes RNA polymerase assembly. Latches the N- and C-terminal regions of the beta' subunit thereby facilitating its interaction with the beta and alpha subunits.</text>
</comment>
<comment type="catalytic activity">
    <reaction evidence="1">
        <text>RNA(n) + a ribonucleoside 5'-triphosphate = RNA(n+1) + diphosphate</text>
        <dbReference type="Rhea" id="RHEA:21248"/>
        <dbReference type="Rhea" id="RHEA-COMP:14527"/>
        <dbReference type="Rhea" id="RHEA-COMP:17342"/>
        <dbReference type="ChEBI" id="CHEBI:33019"/>
        <dbReference type="ChEBI" id="CHEBI:61557"/>
        <dbReference type="ChEBI" id="CHEBI:140395"/>
        <dbReference type="EC" id="2.7.7.6"/>
    </reaction>
</comment>
<comment type="subunit">
    <text evidence="1">The RNAP catalytic core consists of 2 alpha, 1 beta, 1 beta' and 1 omega subunit. When a sigma factor is associated with the core the holoenzyme is formed, which can initiate transcription.</text>
</comment>
<comment type="similarity">
    <text evidence="1">Belongs to the RNA polymerase subunit omega family.</text>
</comment>
<keyword id="KW-0240">DNA-directed RNA polymerase</keyword>
<keyword id="KW-0548">Nucleotidyltransferase</keyword>
<keyword id="KW-1185">Reference proteome</keyword>
<keyword id="KW-0804">Transcription</keyword>
<keyword id="KW-0808">Transferase</keyword>
<gene>
    <name evidence="1" type="primary">rpoZ</name>
    <name type="ordered locus">Glov_2285</name>
</gene>
<accession>B3E4R5</accession>
<reference key="1">
    <citation type="submission" date="2008-05" db="EMBL/GenBank/DDBJ databases">
        <title>Complete sequence of chromosome of Geobacter lovleyi SZ.</title>
        <authorList>
            <consortium name="US DOE Joint Genome Institute"/>
            <person name="Lucas S."/>
            <person name="Copeland A."/>
            <person name="Lapidus A."/>
            <person name="Glavina del Rio T."/>
            <person name="Dalin E."/>
            <person name="Tice H."/>
            <person name="Bruce D."/>
            <person name="Goodwin L."/>
            <person name="Pitluck S."/>
            <person name="Chertkov O."/>
            <person name="Meincke L."/>
            <person name="Brettin T."/>
            <person name="Detter J.C."/>
            <person name="Han C."/>
            <person name="Tapia R."/>
            <person name="Kuske C.R."/>
            <person name="Schmutz J."/>
            <person name="Larimer F."/>
            <person name="Land M."/>
            <person name="Hauser L."/>
            <person name="Kyrpides N."/>
            <person name="Mikhailova N."/>
            <person name="Sung Y."/>
            <person name="Fletcher K.E."/>
            <person name="Ritalahti K.M."/>
            <person name="Loeffler F.E."/>
            <person name="Richardson P."/>
        </authorList>
    </citation>
    <scope>NUCLEOTIDE SEQUENCE [LARGE SCALE GENOMIC DNA]</scope>
    <source>
        <strain>ATCC BAA-1151 / DSM 17278 / SZ</strain>
    </source>
</reference>
<sequence length="68" mass="7631">MARVTVEDCLEKVDNRFMLVMMASKRVKQLYKGAKPLIDPKNNRHVVTSLREIAAGKLSAELSSKRSA</sequence>
<dbReference type="EC" id="2.7.7.6" evidence="1"/>
<dbReference type="EMBL" id="CP001089">
    <property type="protein sequence ID" value="ACD96001.1"/>
    <property type="molecule type" value="Genomic_DNA"/>
</dbReference>
<dbReference type="RefSeq" id="WP_012470335.1">
    <property type="nucleotide sequence ID" value="NC_010814.1"/>
</dbReference>
<dbReference type="SMR" id="B3E4R5"/>
<dbReference type="STRING" id="398767.Glov_2285"/>
<dbReference type="KEGG" id="glo:Glov_2285"/>
<dbReference type="eggNOG" id="COG1758">
    <property type="taxonomic scope" value="Bacteria"/>
</dbReference>
<dbReference type="HOGENOM" id="CLU_125406_5_1_7"/>
<dbReference type="OrthoDB" id="9796300at2"/>
<dbReference type="Proteomes" id="UP000002420">
    <property type="component" value="Chromosome"/>
</dbReference>
<dbReference type="GO" id="GO:0000428">
    <property type="term" value="C:DNA-directed RNA polymerase complex"/>
    <property type="evidence" value="ECO:0007669"/>
    <property type="project" value="UniProtKB-KW"/>
</dbReference>
<dbReference type="GO" id="GO:0003677">
    <property type="term" value="F:DNA binding"/>
    <property type="evidence" value="ECO:0007669"/>
    <property type="project" value="UniProtKB-UniRule"/>
</dbReference>
<dbReference type="GO" id="GO:0003899">
    <property type="term" value="F:DNA-directed RNA polymerase activity"/>
    <property type="evidence" value="ECO:0007669"/>
    <property type="project" value="UniProtKB-UniRule"/>
</dbReference>
<dbReference type="GO" id="GO:0006351">
    <property type="term" value="P:DNA-templated transcription"/>
    <property type="evidence" value="ECO:0007669"/>
    <property type="project" value="UniProtKB-UniRule"/>
</dbReference>
<dbReference type="Gene3D" id="3.90.940.10">
    <property type="match status" value="1"/>
</dbReference>
<dbReference type="HAMAP" id="MF_00366">
    <property type="entry name" value="RNApol_bact_RpoZ"/>
    <property type="match status" value="1"/>
</dbReference>
<dbReference type="InterPro" id="IPR003716">
    <property type="entry name" value="DNA-dir_RNA_pol_omega"/>
</dbReference>
<dbReference type="InterPro" id="IPR006110">
    <property type="entry name" value="Pol_omega/Rpo6/RPB6"/>
</dbReference>
<dbReference type="InterPro" id="IPR036161">
    <property type="entry name" value="RPB6/omega-like_sf"/>
</dbReference>
<dbReference type="NCBIfam" id="TIGR00690">
    <property type="entry name" value="rpoZ"/>
    <property type="match status" value="1"/>
</dbReference>
<dbReference type="PANTHER" id="PTHR34476">
    <property type="entry name" value="DNA-DIRECTED RNA POLYMERASE SUBUNIT OMEGA"/>
    <property type="match status" value="1"/>
</dbReference>
<dbReference type="PANTHER" id="PTHR34476:SF1">
    <property type="entry name" value="DNA-DIRECTED RNA POLYMERASE SUBUNIT OMEGA"/>
    <property type="match status" value="1"/>
</dbReference>
<dbReference type="Pfam" id="PF01192">
    <property type="entry name" value="RNA_pol_Rpb6"/>
    <property type="match status" value="1"/>
</dbReference>
<dbReference type="SMART" id="SM01409">
    <property type="entry name" value="RNA_pol_Rpb6"/>
    <property type="match status" value="1"/>
</dbReference>
<dbReference type="SUPFAM" id="SSF63562">
    <property type="entry name" value="RPB6/omega subunit-like"/>
    <property type="match status" value="1"/>
</dbReference>
<feature type="chain" id="PRO_1000121230" description="DNA-directed RNA polymerase subunit omega">
    <location>
        <begin position="1"/>
        <end position="68"/>
    </location>
</feature>
<organism>
    <name type="scientific">Trichlorobacter lovleyi (strain ATCC BAA-1151 / DSM 17278 / SZ)</name>
    <name type="common">Geobacter lovleyi</name>
    <dbReference type="NCBI Taxonomy" id="398767"/>
    <lineage>
        <taxon>Bacteria</taxon>
        <taxon>Pseudomonadati</taxon>
        <taxon>Thermodesulfobacteriota</taxon>
        <taxon>Desulfuromonadia</taxon>
        <taxon>Geobacterales</taxon>
        <taxon>Geobacteraceae</taxon>
        <taxon>Trichlorobacter</taxon>
    </lineage>
</organism>
<proteinExistence type="inferred from homology"/>
<protein>
    <recommendedName>
        <fullName evidence="1">DNA-directed RNA polymerase subunit omega</fullName>
        <shortName evidence="1">RNAP omega subunit</shortName>
        <ecNumber evidence="1">2.7.7.6</ecNumber>
    </recommendedName>
    <alternativeName>
        <fullName evidence="1">RNA polymerase omega subunit</fullName>
    </alternativeName>
    <alternativeName>
        <fullName evidence="1">Transcriptase subunit omega</fullName>
    </alternativeName>
</protein>
<evidence type="ECO:0000255" key="1">
    <source>
        <dbReference type="HAMAP-Rule" id="MF_00366"/>
    </source>
</evidence>
<name>RPOZ_TRIL1</name>